<gene>
    <name evidence="1" type="primary">phnC</name>
    <name type="ordered locus">LGAS_0130</name>
</gene>
<evidence type="ECO:0000255" key="1">
    <source>
        <dbReference type="HAMAP-Rule" id="MF_01713"/>
    </source>
</evidence>
<dbReference type="EC" id="7.3.2.2" evidence="1"/>
<dbReference type="EMBL" id="CP000413">
    <property type="protein sequence ID" value="ABJ59542.1"/>
    <property type="molecule type" value="Genomic_DNA"/>
</dbReference>
<dbReference type="RefSeq" id="WP_003651369.1">
    <property type="nucleotide sequence ID" value="NZ_WBMG01000001.1"/>
</dbReference>
<dbReference type="SMR" id="Q046T0"/>
<dbReference type="GeneID" id="29638746"/>
<dbReference type="KEGG" id="lga:LGAS_0130"/>
<dbReference type="HOGENOM" id="CLU_000604_1_22_9"/>
<dbReference type="BioCyc" id="LGAS324831:G1G6Y-128-MONOMER"/>
<dbReference type="Proteomes" id="UP000000664">
    <property type="component" value="Chromosome"/>
</dbReference>
<dbReference type="GO" id="GO:0005886">
    <property type="term" value="C:plasma membrane"/>
    <property type="evidence" value="ECO:0007669"/>
    <property type="project" value="UniProtKB-SubCell"/>
</dbReference>
<dbReference type="GO" id="GO:0015416">
    <property type="term" value="F:ABC-type phosphonate transporter activity"/>
    <property type="evidence" value="ECO:0007669"/>
    <property type="project" value="UniProtKB-EC"/>
</dbReference>
<dbReference type="GO" id="GO:0005524">
    <property type="term" value="F:ATP binding"/>
    <property type="evidence" value="ECO:0007669"/>
    <property type="project" value="UniProtKB-KW"/>
</dbReference>
<dbReference type="GO" id="GO:0016887">
    <property type="term" value="F:ATP hydrolysis activity"/>
    <property type="evidence" value="ECO:0007669"/>
    <property type="project" value="InterPro"/>
</dbReference>
<dbReference type="CDD" id="cd03256">
    <property type="entry name" value="ABC_PhnC_transporter"/>
    <property type="match status" value="1"/>
</dbReference>
<dbReference type="Gene3D" id="3.40.50.300">
    <property type="entry name" value="P-loop containing nucleotide triphosphate hydrolases"/>
    <property type="match status" value="1"/>
</dbReference>
<dbReference type="InterPro" id="IPR003593">
    <property type="entry name" value="AAA+_ATPase"/>
</dbReference>
<dbReference type="InterPro" id="IPR003439">
    <property type="entry name" value="ABC_transporter-like_ATP-bd"/>
</dbReference>
<dbReference type="InterPro" id="IPR017871">
    <property type="entry name" value="ABC_transporter-like_CS"/>
</dbReference>
<dbReference type="InterPro" id="IPR012693">
    <property type="entry name" value="ABC_transpr_PhnC"/>
</dbReference>
<dbReference type="InterPro" id="IPR050086">
    <property type="entry name" value="MetN_ABC_transporter-like"/>
</dbReference>
<dbReference type="InterPro" id="IPR027417">
    <property type="entry name" value="P-loop_NTPase"/>
</dbReference>
<dbReference type="NCBIfam" id="TIGR02315">
    <property type="entry name" value="ABC_phnC"/>
    <property type="match status" value="1"/>
</dbReference>
<dbReference type="PANTHER" id="PTHR43166">
    <property type="entry name" value="AMINO ACID IMPORT ATP-BINDING PROTEIN"/>
    <property type="match status" value="1"/>
</dbReference>
<dbReference type="PANTHER" id="PTHR43166:SF6">
    <property type="entry name" value="PHOSPHONATES IMPORT ATP-BINDING PROTEIN PHNC"/>
    <property type="match status" value="1"/>
</dbReference>
<dbReference type="Pfam" id="PF00005">
    <property type="entry name" value="ABC_tran"/>
    <property type="match status" value="1"/>
</dbReference>
<dbReference type="SMART" id="SM00382">
    <property type="entry name" value="AAA"/>
    <property type="match status" value="1"/>
</dbReference>
<dbReference type="SUPFAM" id="SSF52540">
    <property type="entry name" value="P-loop containing nucleoside triphosphate hydrolases"/>
    <property type="match status" value="1"/>
</dbReference>
<dbReference type="PROSITE" id="PS00211">
    <property type="entry name" value="ABC_TRANSPORTER_1"/>
    <property type="match status" value="1"/>
</dbReference>
<dbReference type="PROSITE" id="PS50893">
    <property type="entry name" value="ABC_TRANSPORTER_2"/>
    <property type="match status" value="1"/>
</dbReference>
<dbReference type="PROSITE" id="PS51249">
    <property type="entry name" value="PHNC"/>
    <property type="match status" value="1"/>
</dbReference>
<proteinExistence type="inferred from homology"/>
<comment type="function">
    <text evidence="1">Part of the ABC transporter complex PhnCDE involved in phosphonates import. Responsible for energy coupling to the transport system.</text>
</comment>
<comment type="catalytic activity">
    <reaction evidence="1">
        <text>phosphonate(out) + ATP + H2O = phosphonate(in) + ADP + phosphate + H(+)</text>
        <dbReference type="Rhea" id="RHEA:18065"/>
        <dbReference type="ChEBI" id="CHEBI:15377"/>
        <dbReference type="ChEBI" id="CHEBI:15378"/>
        <dbReference type="ChEBI" id="CHEBI:16215"/>
        <dbReference type="ChEBI" id="CHEBI:30616"/>
        <dbReference type="ChEBI" id="CHEBI:43474"/>
        <dbReference type="ChEBI" id="CHEBI:456216"/>
        <dbReference type="EC" id="7.3.2.2"/>
    </reaction>
</comment>
<comment type="subunit">
    <text evidence="1">The complex is composed of two ATP-binding proteins (PhnC), two transmembrane proteins (PhnE) and a solute-binding protein (PhnD).</text>
</comment>
<comment type="subcellular location">
    <subcellularLocation>
        <location evidence="1">Cell membrane</location>
        <topology evidence="1">Peripheral membrane protein</topology>
    </subcellularLocation>
</comment>
<comment type="similarity">
    <text evidence="1">Belongs to the ABC transporter superfamily. Phosphonates importer (TC 3.A.1.9.1) family.</text>
</comment>
<name>PHNC_LACGA</name>
<reference key="1">
    <citation type="journal article" date="2006" name="Proc. Natl. Acad. Sci. U.S.A.">
        <title>Comparative genomics of the lactic acid bacteria.</title>
        <authorList>
            <person name="Makarova K.S."/>
            <person name="Slesarev A."/>
            <person name="Wolf Y.I."/>
            <person name="Sorokin A."/>
            <person name="Mirkin B."/>
            <person name="Koonin E.V."/>
            <person name="Pavlov A."/>
            <person name="Pavlova N."/>
            <person name="Karamychev V."/>
            <person name="Polouchine N."/>
            <person name="Shakhova V."/>
            <person name="Grigoriev I."/>
            <person name="Lou Y."/>
            <person name="Rohksar D."/>
            <person name="Lucas S."/>
            <person name="Huang K."/>
            <person name="Goodstein D.M."/>
            <person name="Hawkins T."/>
            <person name="Plengvidhya V."/>
            <person name="Welker D."/>
            <person name="Hughes J."/>
            <person name="Goh Y."/>
            <person name="Benson A."/>
            <person name="Baldwin K."/>
            <person name="Lee J.-H."/>
            <person name="Diaz-Muniz I."/>
            <person name="Dosti B."/>
            <person name="Smeianov V."/>
            <person name="Wechter W."/>
            <person name="Barabote R."/>
            <person name="Lorca G."/>
            <person name="Altermann E."/>
            <person name="Barrangou R."/>
            <person name="Ganesan B."/>
            <person name="Xie Y."/>
            <person name="Rawsthorne H."/>
            <person name="Tamir D."/>
            <person name="Parker C."/>
            <person name="Breidt F."/>
            <person name="Broadbent J.R."/>
            <person name="Hutkins R."/>
            <person name="O'Sullivan D."/>
            <person name="Steele J."/>
            <person name="Unlu G."/>
            <person name="Saier M.H. Jr."/>
            <person name="Klaenhammer T."/>
            <person name="Richardson P."/>
            <person name="Kozyavkin S."/>
            <person name="Weimer B.C."/>
            <person name="Mills D.A."/>
        </authorList>
    </citation>
    <scope>NUCLEOTIDE SEQUENCE [LARGE SCALE GENOMIC DNA]</scope>
    <source>
        <strain>ATCC 33323 / DSM 20243 / BCRC 14619 / CIP 102991 / JCM 1131 / KCTC 3163 / NCIMB 11718 / NCTC 13722 / AM63</strain>
    </source>
</reference>
<feature type="chain" id="PRO_0000274719" description="Phosphonates import ATP-binding protein PhnC">
    <location>
        <begin position="1"/>
        <end position="261"/>
    </location>
</feature>
<feature type="domain" description="ABC transporter" evidence="1">
    <location>
        <begin position="9"/>
        <end position="253"/>
    </location>
</feature>
<feature type="binding site" evidence="1">
    <location>
        <begin position="42"/>
        <end position="49"/>
    </location>
    <ligand>
        <name>ATP</name>
        <dbReference type="ChEBI" id="CHEBI:30616"/>
    </ligand>
</feature>
<keyword id="KW-0067">ATP-binding</keyword>
<keyword id="KW-1003">Cell membrane</keyword>
<keyword id="KW-0472">Membrane</keyword>
<keyword id="KW-0547">Nucleotide-binding</keyword>
<keyword id="KW-0918">Phosphonate transport</keyword>
<keyword id="KW-1278">Translocase</keyword>
<keyword id="KW-0813">Transport</keyword>
<protein>
    <recommendedName>
        <fullName evidence="1">Phosphonates import ATP-binding protein PhnC</fullName>
        <ecNumber evidence="1">7.3.2.2</ecNumber>
    </recommendedName>
</protein>
<sequence>MAATNQPMIQLKDVSKIYDNGTVGLKDINLNIDKGEFVVVVGLSGAGKSTLLRSINRLQDVSKGDILIDGKSITSAKGKDLREIRRDIGMIFQSFNLVKRSSVLRNVLTGRVAYYPTWKTTFNLFTKEDKQKAYEALQRVDLADKVYTRADQLSGGQQQRVAIARVLTQNPKIILADEPTASLDPQTSRRVMHDLKMLNEEYGMTVVANLHSVELAKEFGDRVIGVRAGQIVYDGKMSETSQAVFDDIYNGGNGKKGEEDA</sequence>
<organism>
    <name type="scientific">Lactobacillus gasseri (strain ATCC 33323 / DSM 20243 / BCRC 14619 / CIP 102991 / JCM 1131 / KCTC 3163 / NCIMB 11718 / NCTC 13722 / AM63)</name>
    <dbReference type="NCBI Taxonomy" id="324831"/>
    <lineage>
        <taxon>Bacteria</taxon>
        <taxon>Bacillati</taxon>
        <taxon>Bacillota</taxon>
        <taxon>Bacilli</taxon>
        <taxon>Lactobacillales</taxon>
        <taxon>Lactobacillaceae</taxon>
        <taxon>Lactobacillus</taxon>
    </lineage>
</organism>
<accession>Q046T0</accession>